<dbReference type="EMBL" id="GR006840">
    <property type="status" value="NOT_ANNOTATED_CDS"/>
    <property type="molecule type" value="mRNA"/>
</dbReference>
<dbReference type="SMR" id="P0DI52"/>
<dbReference type="eggNOG" id="ENOG502RYTF">
    <property type="taxonomic scope" value="Eukaryota"/>
</dbReference>
<dbReference type="GO" id="GO:0005886">
    <property type="term" value="C:plasma membrane"/>
    <property type="evidence" value="ECO:0007669"/>
    <property type="project" value="UniProtKB-SubCell"/>
</dbReference>
<dbReference type="GO" id="GO:0071555">
    <property type="term" value="P:cell wall organization"/>
    <property type="evidence" value="ECO:0007669"/>
    <property type="project" value="UniProtKB-KW"/>
</dbReference>
<dbReference type="InterPro" id="IPR006459">
    <property type="entry name" value="CASP/CASPL"/>
</dbReference>
<dbReference type="InterPro" id="IPR006702">
    <property type="entry name" value="CASP_dom"/>
</dbReference>
<dbReference type="InterPro" id="IPR044173">
    <property type="entry name" value="CASPL"/>
</dbReference>
<dbReference type="NCBIfam" id="TIGR01569">
    <property type="entry name" value="A_tha_TIGR01569"/>
    <property type="match status" value="1"/>
</dbReference>
<dbReference type="PANTHER" id="PTHR36488:SF11">
    <property type="entry name" value="CASP-LIKE PROTEIN"/>
    <property type="match status" value="1"/>
</dbReference>
<dbReference type="PANTHER" id="PTHR36488">
    <property type="entry name" value="CASP-LIKE PROTEIN 1U1"/>
    <property type="match status" value="1"/>
</dbReference>
<dbReference type="Pfam" id="PF04535">
    <property type="entry name" value="CASP_dom"/>
    <property type="match status" value="1"/>
</dbReference>
<feature type="chain" id="PRO_0000417786" description="Casparian strip membrane protein 1">
    <location>
        <begin position="1"/>
        <end position="210"/>
    </location>
</feature>
<feature type="topological domain" description="Cytoplasmic" evidence="2">
    <location>
        <begin position="1"/>
        <end position="48"/>
    </location>
</feature>
<feature type="transmembrane region" description="Helical" evidence="2">
    <location>
        <begin position="49"/>
        <end position="69"/>
    </location>
</feature>
<feature type="topological domain" description="Extracellular" evidence="2">
    <location>
        <begin position="70"/>
        <end position="98"/>
    </location>
</feature>
<feature type="transmembrane region" description="Helical" evidence="2">
    <location>
        <begin position="99"/>
        <end position="119"/>
    </location>
</feature>
<feature type="topological domain" description="Cytoplasmic" evidence="2">
    <location>
        <begin position="120"/>
        <end position="138"/>
    </location>
</feature>
<feature type="transmembrane region" description="Helical" evidence="2">
    <location>
        <begin position="139"/>
        <end position="159"/>
    </location>
</feature>
<feature type="topological domain" description="Extracellular" evidence="2">
    <location>
        <begin position="160"/>
        <end position="183"/>
    </location>
</feature>
<feature type="transmembrane region" description="Helical" evidence="2">
    <location>
        <begin position="184"/>
        <end position="204"/>
    </location>
</feature>
<feature type="topological domain" description="Cytoplasmic" evidence="2">
    <location>
        <begin position="205"/>
        <end position="210"/>
    </location>
</feature>
<feature type="region of interest" description="Disordered" evidence="3">
    <location>
        <begin position="1"/>
        <end position="25"/>
    </location>
</feature>
<keyword id="KW-1003">Cell membrane</keyword>
<keyword id="KW-0961">Cell wall biogenesis/degradation</keyword>
<keyword id="KW-0472">Membrane</keyword>
<keyword id="KW-0812">Transmembrane</keyword>
<keyword id="KW-1133">Transmembrane helix</keyword>
<evidence type="ECO:0000250" key="1"/>
<evidence type="ECO:0000255" key="2"/>
<evidence type="ECO:0000256" key="3">
    <source>
        <dbReference type="SAM" id="MobiDB-lite"/>
    </source>
</evidence>
<evidence type="ECO:0000305" key="4"/>
<sequence length="210" mass="22448">MEKSEATTIDVAETSRESKGKAPLLRDPPAWVPAAVERQRAAPAYKRGVAIFDLILRISAATAALAATITMGTTEQTLPFFTQFFQFQASYDDLPTFTFFVIAMSIVTGYLVLSVPFSIVCIARPVAAAPRLLLILCDTLAVTLNTSAAGASAAIVYLAHNGNSDANWLAICQQFNDFCQRTSGAVVASFVAVVLLIFLVVLSASALKKH</sequence>
<protein>
    <recommendedName>
        <fullName>Casparian strip membrane protein 1</fullName>
        <shortName>MgCASP1</shortName>
    </recommendedName>
</protein>
<name>CASP1_ERYGU</name>
<proteinExistence type="evidence at transcript level"/>
<organism>
    <name type="scientific">Erythranthe guttata</name>
    <name type="common">Yellow monkey flower</name>
    <name type="synonym">Mimulus guttatus</name>
    <dbReference type="NCBI Taxonomy" id="4155"/>
    <lineage>
        <taxon>Eukaryota</taxon>
        <taxon>Viridiplantae</taxon>
        <taxon>Streptophyta</taxon>
        <taxon>Embryophyta</taxon>
        <taxon>Tracheophyta</taxon>
        <taxon>Spermatophyta</taxon>
        <taxon>Magnoliopsida</taxon>
        <taxon>eudicotyledons</taxon>
        <taxon>Gunneridae</taxon>
        <taxon>Pentapetalae</taxon>
        <taxon>asterids</taxon>
        <taxon>lamiids</taxon>
        <taxon>Lamiales</taxon>
        <taxon>Phrymaceae</taxon>
        <taxon>Erythranthe</taxon>
    </lineage>
</organism>
<accession>P0DI52</accession>
<comment type="function">
    <text evidence="1">Regulates membrane-cell wall junctions and localized cell wall deposition. Required for establishment of the Casparian strip membrane domain (CSD) and the subsequent formation of Casparian strips, a cell wall modification of the root endodermis that determines an apoplastic barrier between the intraorganismal apoplasm and the extraorganismal apoplasm and prevents lateral diffusion (By similarity).</text>
</comment>
<comment type="subunit">
    <text evidence="1">Homodimer and heterodimers.</text>
</comment>
<comment type="subcellular location">
    <subcellularLocation>
        <location evidence="1">Cell membrane</location>
        <topology evidence="1">Multi-pass membrane protein</topology>
    </subcellularLocation>
    <text evidence="1">Very restricted localization following a belt shape within the plasma membrane which coincides with the position of the Casparian strip membrane domain in the root endodermis.</text>
</comment>
<comment type="similarity">
    <text evidence="4">Belongs to the Casparian strip membrane proteins (CASP) family.</text>
</comment>
<reference key="1">
    <citation type="submission" date="2009-05" db="EMBL/GenBank/DDBJ databases">
        <title>DOE Joint Genome Institute Mimulus EST project.</title>
        <authorList>
            <person name="Lucas S."/>
            <person name="Rokhsar D."/>
            <person name="Wang M."/>
            <person name="Lindquist E.A."/>
            <person name="Bradshaw H.D. Jr."/>
            <person name="Case A.L."/>
            <person name="Willis J.H."/>
        </authorList>
    </citation>
    <scope>NUCLEOTIDE SEQUENCE [LARGE SCALE MRNA]</scope>
    <source>
        <strain>cv. IM62</strain>
        <tissue>Root</tissue>
    </source>
</reference>
<reference key="2">
    <citation type="journal article" date="2014" name="Plant Physiol.">
        <title>Functional and evolutionary analysis of the CASPARIAN STRIP MEMBRANE DOMAIN PROTEIN family.</title>
        <authorList>
            <person name="Roppolo D."/>
            <person name="Boeckmann B."/>
            <person name="Pfister A."/>
            <person name="Boutet E."/>
            <person name="Rubio M.C."/>
            <person name="Denervaud-Tendon V."/>
            <person name="Vermeer J.E."/>
            <person name="Gheyselinck J."/>
            <person name="Xenarios I."/>
            <person name="Geldner N."/>
        </authorList>
    </citation>
    <scope>GENE FAMILY</scope>
    <scope>NOMENCLATURE</scope>
</reference>